<sequence length="206" mass="24069">MVKIIGISGGSGSGKTTIVNKISEVISEFVLISQDNYYKSVGDYEYEFLDVNFDHPDAFDNNLFYKQLKKLKENQSINMPLYDFINHKRRDETIKIVPTPIIIVEGIMIFVEERVRNLIDLKIYIDTPNDIRFIRRLERDMSKRGRTLESVIEQYLRTTRAGYYRFIEPTKEYADLIIPEGGHNDKALYVLSSFLKTLVKDSSKFF</sequence>
<proteinExistence type="inferred from homology"/>
<keyword id="KW-0067">ATP-binding</keyword>
<keyword id="KW-0963">Cytoplasm</keyword>
<keyword id="KW-0418">Kinase</keyword>
<keyword id="KW-0547">Nucleotide-binding</keyword>
<keyword id="KW-0808">Transferase</keyword>
<dbReference type="EC" id="2.7.1.48" evidence="1"/>
<dbReference type="EMBL" id="CP000976">
    <property type="protein sequence ID" value="ACH92979.1"/>
    <property type="molecule type" value="Genomic_DNA"/>
</dbReference>
<dbReference type="RefSeq" id="WP_012537791.1">
    <property type="nucleotide sequence ID" value="NC_011229.1"/>
</dbReference>
<dbReference type="SMR" id="B5RLM3"/>
<dbReference type="STRING" id="412419.BDU_21"/>
<dbReference type="KEGG" id="bdu:BDU_21"/>
<dbReference type="eggNOG" id="COG0572">
    <property type="taxonomic scope" value="Bacteria"/>
</dbReference>
<dbReference type="HOGENOM" id="CLU_021278_1_2_12"/>
<dbReference type="OrthoDB" id="9777642at2"/>
<dbReference type="UniPathway" id="UPA00574">
    <property type="reaction ID" value="UER00637"/>
</dbReference>
<dbReference type="UniPathway" id="UPA00579">
    <property type="reaction ID" value="UER00640"/>
</dbReference>
<dbReference type="Proteomes" id="UP000000611">
    <property type="component" value="Chromosome"/>
</dbReference>
<dbReference type="GO" id="GO:0005737">
    <property type="term" value="C:cytoplasm"/>
    <property type="evidence" value="ECO:0007669"/>
    <property type="project" value="UniProtKB-SubCell"/>
</dbReference>
<dbReference type="GO" id="GO:0005524">
    <property type="term" value="F:ATP binding"/>
    <property type="evidence" value="ECO:0007669"/>
    <property type="project" value="UniProtKB-UniRule"/>
</dbReference>
<dbReference type="GO" id="GO:0043771">
    <property type="term" value="F:cytidine kinase activity"/>
    <property type="evidence" value="ECO:0007669"/>
    <property type="project" value="RHEA"/>
</dbReference>
<dbReference type="GO" id="GO:0004849">
    <property type="term" value="F:uridine kinase activity"/>
    <property type="evidence" value="ECO:0007669"/>
    <property type="project" value="UniProtKB-UniRule"/>
</dbReference>
<dbReference type="GO" id="GO:0044211">
    <property type="term" value="P:CTP salvage"/>
    <property type="evidence" value="ECO:0007669"/>
    <property type="project" value="UniProtKB-UniRule"/>
</dbReference>
<dbReference type="GO" id="GO:0044206">
    <property type="term" value="P:UMP salvage"/>
    <property type="evidence" value="ECO:0007669"/>
    <property type="project" value="UniProtKB-UniRule"/>
</dbReference>
<dbReference type="CDD" id="cd02023">
    <property type="entry name" value="UMPK"/>
    <property type="match status" value="1"/>
</dbReference>
<dbReference type="Gene3D" id="3.40.50.300">
    <property type="entry name" value="P-loop containing nucleotide triphosphate hydrolases"/>
    <property type="match status" value="1"/>
</dbReference>
<dbReference type="HAMAP" id="MF_00551">
    <property type="entry name" value="Uridine_kinase"/>
    <property type="match status" value="1"/>
</dbReference>
<dbReference type="InterPro" id="IPR027417">
    <property type="entry name" value="P-loop_NTPase"/>
</dbReference>
<dbReference type="InterPro" id="IPR006083">
    <property type="entry name" value="PRK/URK"/>
</dbReference>
<dbReference type="InterPro" id="IPR026008">
    <property type="entry name" value="Uridine_kinase"/>
</dbReference>
<dbReference type="InterPro" id="IPR000764">
    <property type="entry name" value="Uridine_kinase-like"/>
</dbReference>
<dbReference type="NCBIfam" id="NF004018">
    <property type="entry name" value="PRK05480.1"/>
    <property type="match status" value="1"/>
</dbReference>
<dbReference type="NCBIfam" id="TIGR00235">
    <property type="entry name" value="udk"/>
    <property type="match status" value="1"/>
</dbReference>
<dbReference type="PANTHER" id="PTHR10285">
    <property type="entry name" value="URIDINE KINASE"/>
    <property type="match status" value="1"/>
</dbReference>
<dbReference type="Pfam" id="PF00485">
    <property type="entry name" value="PRK"/>
    <property type="match status" value="1"/>
</dbReference>
<dbReference type="PRINTS" id="PR00988">
    <property type="entry name" value="URIDINKINASE"/>
</dbReference>
<dbReference type="SUPFAM" id="SSF52540">
    <property type="entry name" value="P-loop containing nucleoside triphosphate hydrolases"/>
    <property type="match status" value="1"/>
</dbReference>
<gene>
    <name evidence="1" type="primary">udk</name>
    <name type="ordered locus">BDU_21</name>
</gene>
<organism>
    <name type="scientific">Borrelia duttonii (strain Ly)</name>
    <dbReference type="NCBI Taxonomy" id="412419"/>
    <lineage>
        <taxon>Bacteria</taxon>
        <taxon>Pseudomonadati</taxon>
        <taxon>Spirochaetota</taxon>
        <taxon>Spirochaetia</taxon>
        <taxon>Spirochaetales</taxon>
        <taxon>Borreliaceae</taxon>
        <taxon>Borrelia</taxon>
    </lineage>
</organism>
<accession>B5RLM3</accession>
<evidence type="ECO:0000255" key="1">
    <source>
        <dbReference type="HAMAP-Rule" id="MF_00551"/>
    </source>
</evidence>
<protein>
    <recommendedName>
        <fullName evidence="1">Uridine kinase</fullName>
        <ecNumber evidence="1">2.7.1.48</ecNumber>
    </recommendedName>
    <alternativeName>
        <fullName evidence="1">Cytidine monophosphokinase</fullName>
    </alternativeName>
    <alternativeName>
        <fullName evidence="1">Uridine monophosphokinase</fullName>
    </alternativeName>
</protein>
<name>URK_BORDL</name>
<comment type="catalytic activity">
    <reaction evidence="1">
        <text>uridine + ATP = UMP + ADP + H(+)</text>
        <dbReference type="Rhea" id="RHEA:16825"/>
        <dbReference type="ChEBI" id="CHEBI:15378"/>
        <dbReference type="ChEBI" id="CHEBI:16704"/>
        <dbReference type="ChEBI" id="CHEBI:30616"/>
        <dbReference type="ChEBI" id="CHEBI:57865"/>
        <dbReference type="ChEBI" id="CHEBI:456216"/>
        <dbReference type="EC" id="2.7.1.48"/>
    </reaction>
</comment>
<comment type="catalytic activity">
    <reaction evidence="1">
        <text>cytidine + ATP = CMP + ADP + H(+)</text>
        <dbReference type="Rhea" id="RHEA:24674"/>
        <dbReference type="ChEBI" id="CHEBI:15378"/>
        <dbReference type="ChEBI" id="CHEBI:17562"/>
        <dbReference type="ChEBI" id="CHEBI:30616"/>
        <dbReference type="ChEBI" id="CHEBI:60377"/>
        <dbReference type="ChEBI" id="CHEBI:456216"/>
        <dbReference type="EC" id="2.7.1.48"/>
    </reaction>
</comment>
<comment type="pathway">
    <text evidence="1">Pyrimidine metabolism; CTP biosynthesis via salvage pathway; CTP from cytidine: step 1/3.</text>
</comment>
<comment type="pathway">
    <text evidence="1">Pyrimidine metabolism; UMP biosynthesis via salvage pathway; UMP from uridine: step 1/1.</text>
</comment>
<comment type="subcellular location">
    <subcellularLocation>
        <location evidence="1">Cytoplasm</location>
    </subcellularLocation>
</comment>
<comment type="similarity">
    <text evidence="1">Belongs to the uridine kinase family.</text>
</comment>
<feature type="chain" id="PRO_1000129070" description="Uridine kinase">
    <location>
        <begin position="1"/>
        <end position="206"/>
    </location>
</feature>
<feature type="binding site" evidence="1">
    <location>
        <begin position="9"/>
        <end position="16"/>
    </location>
    <ligand>
        <name>ATP</name>
        <dbReference type="ChEBI" id="CHEBI:30616"/>
    </ligand>
</feature>
<reference key="1">
    <citation type="journal article" date="2008" name="PLoS Genet.">
        <title>The genome of Borrelia recurrentis, the agent of deadly louse-borne relapsing fever, is a degraded subset of tick-borne Borrelia duttonii.</title>
        <authorList>
            <person name="Lescot M."/>
            <person name="Audic S."/>
            <person name="Robert C."/>
            <person name="Nguyen T.T."/>
            <person name="Blanc G."/>
            <person name="Cutler S.J."/>
            <person name="Wincker P."/>
            <person name="Couloux A."/>
            <person name="Claverie J.-M."/>
            <person name="Raoult D."/>
            <person name="Drancourt M."/>
        </authorList>
    </citation>
    <scope>NUCLEOTIDE SEQUENCE [LARGE SCALE GENOMIC DNA]</scope>
    <source>
        <strain>Ly</strain>
    </source>
</reference>